<sequence length="152" mass="17191">MSTINTDTNDTMPHISVHAQYIKDLSLENPSAPSSLAALDQRPQIDLSLDINVTNLSEENFYEVELNIEAIARNEKYKLFQIELKYAGVFNLINIDSEQHPILLSVHCPAMIFPFARKIIASCTQDAGFQPLMIDPIDFGALYHKKMSEHQN</sequence>
<evidence type="ECO:0000255" key="1">
    <source>
        <dbReference type="HAMAP-Rule" id="MF_00821"/>
    </source>
</evidence>
<evidence type="ECO:0000305" key="2"/>
<keyword id="KW-0143">Chaperone</keyword>
<keyword id="KW-0963">Cytoplasm</keyword>
<keyword id="KW-0653">Protein transport</keyword>
<keyword id="KW-0811">Translocation</keyword>
<keyword id="KW-0813">Transport</keyword>
<gene>
    <name evidence="1" type="primary">secB</name>
    <name type="ordered locus">RMA_0108</name>
</gene>
<feature type="chain" id="PRO_0000318262" description="Protein-export protein SecB">
    <location>
        <begin position="1"/>
        <end position="152"/>
    </location>
</feature>
<dbReference type="EMBL" id="CP000683">
    <property type="protein sequence ID" value="ABV84413.1"/>
    <property type="status" value="ALT_INIT"/>
    <property type="molecule type" value="Genomic_DNA"/>
</dbReference>
<dbReference type="RefSeq" id="WP_041404476.1">
    <property type="nucleotide sequence ID" value="NC_009900.1"/>
</dbReference>
<dbReference type="SMR" id="A8F0H7"/>
<dbReference type="KEGG" id="rms:RMA_0108"/>
<dbReference type="HOGENOM" id="CLU_111574_0_0_5"/>
<dbReference type="Proteomes" id="UP000001311">
    <property type="component" value="Chromosome"/>
</dbReference>
<dbReference type="GO" id="GO:0005737">
    <property type="term" value="C:cytoplasm"/>
    <property type="evidence" value="ECO:0007669"/>
    <property type="project" value="UniProtKB-SubCell"/>
</dbReference>
<dbReference type="GO" id="GO:0051082">
    <property type="term" value="F:unfolded protein binding"/>
    <property type="evidence" value="ECO:0007669"/>
    <property type="project" value="InterPro"/>
</dbReference>
<dbReference type="GO" id="GO:0006457">
    <property type="term" value="P:protein folding"/>
    <property type="evidence" value="ECO:0007669"/>
    <property type="project" value="UniProtKB-UniRule"/>
</dbReference>
<dbReference type="GO" id="GO:0051262">
    <property type="term" value="P:protein tetramerization"/>
    <property type="evidence" value="ECO:0007669"/>
    <property type="project" value="InterPro"/>
</dbReference>
<dbReference type="GO" id="GO:0015031">
    <property type="term" value="P:protein transport"/>
    <property type="evidence" value="ECO:0007669"/>
    <property type="project" value="UniProtKB-UniRule"/>
</dbReference>
<dbReference type="CDD" id="cd00557">
    <property type="entry name" value="Translocase_SecB"/>
    <property type="match status" value="1"/>
</dbReference>
<dbReference type="Gene3D" id="3.10.420.10">
    <property type="entry name" value="SecB-like"/>
    <property type="match status" value="1"/>
</dbReference>
<dbReference type="HAMAP" id="MF_00821">
    <property type="entry name" value="SecB"/>
    <property type="match status" value="1"/>
</dbReference>
<dbReference type="InterPro" id="IPR003708">
    <property type="entry name" value="SecB"/>
</dbReference>
<dbReference type="InterPro" id="IPR035958">
    <property type="entry name" value="SecB-like_sf"/>
</dbReference>
<dbReference type="NCBIfam" id="NF004392">
    <property type="entry name" value="PRK05751.1-3"/>
    <property type="match status" value="1"/>
</dbReference>
<dbReference type="NCBIfam" id="TIGR00809">
    <property type="entry name" value="secB"/>
    <property type="match status" value="1"/>
</dbReference>
<dbReference type="PANTHER" id="PTHR36918">
    <property type="match status" value="1"/>
</dbReference>
<dbReference type="PANTHER" id="PTHR36918:SF1">
    <property type="entry name" value="PROTEIN-EXPORT PROTEIN SECB"/>
    <property type="match status" value="1"/>
</dbReference>
<dbReference type="Pfam" id="PF02556">
    <property type="entry name" value="SecB"/>
    <property type="match status" value="1"/>
</dbReference>
<dbReference type="PRINTS" id="PR01594">
    <property type="entry name" value="SECBCHAPRONE"/>
</dbReference>
<dbReference type="SUPFAM" id="SSF54611">
    <property type="entry name" value="SecB-like"/>
    <property type="match status" value="1"/>
</dbReference>
<reference key="1">
    <citation type="journal article" date="2007" name="Genome Res.">
        <title>Lateral gene transfer between obligate intracellular bacteria: evidence from the Rickettsia massiliae genome.</title>
        <authorList>
            <person name="Blanc G."/>
            <person name="Ogata H."/>
            <person name="Robert C."/>
            <person name="Audic S."/>
            <person name="Claverie J.-M."/>
            <person name="Raoult D."/>
        </authorList>
    </citation>
    <scope>NUCLEOTIDE SEQUENCE [LARGE SCALE GENOMIC DNA]</scope>
    <source>
        <strain>Mtu5</strain>
    </source>
</reference>
<comment type="function">
    <text evidence="1">One of the proteins required for the normal export of preproteins out of the cell cytoplasm. It is a molecular chaperone that binds to a subset of precursor proteins, maintaining them in a translocation-competent state. It also specifically binds to its receptor SecA.</text>
</comment>
<comment type="subunit">
    <text evidence="1">Homotetramer, a dimer of dimers. One homotetramer interacts with 1 SecA dimer.</text>
</comment>
<comment type="subcellular location">
    <subcellularLocation>
        <location evidence="1">Cytoplasm</location>
    </subcellularLocation>
</comment>
<comment type="similarity">
    <text evidence="1">Belongs to the SecB family.</text>
</comment>
<comment type="sequence caution" evidence="2">
    <conflict type="erroneous initiation">
        <sequence resource="EMBL-CDS" id="ABV84413"/>
    </conflict>
</comment>
<protein>
    <recommendedName>
        <fullName evidence="1">Protein-export protein SecB</fullName>
    </recommendedName>
</protein>
<organism>
    <name type="scientific">Rickettsia massiliae (strain Mtu5)</name>
    <dbReference type="NCBI Taxonomy" id="416276"/>
    <lineage>
        <taxon>Bacteria</taxon>
        <taxon>Pseudomonadati</taxon>
        <taxon>Pseudomonadota</taxon>
        <taxon>Alphaproteobacteria</taxon>
        <taxon>Rickettsiales</taxon>
        <taxon>Rickettsiaceae</taxon>
        <taxon>Rickettsieae</taxon>
        <taxon>Rickettsia</taxon>
        <taxon>spotted fever group</taxon>
    </lineage>
</organism>
<accession>A8F0H7</accession>
<name>SECB_RICM5</name>
<proteinExistence type="inferred from homology"/>